<proteinExistence type="inferred from homology"/>
<sequence>MAETSNVLRVNIVTPDGLVYDHHARMLVVHSVAGELGIMANHEPIVTPLEIGEVDVQRVDASDHNDSIAVNGGFMEVSENVASIVADSAERERDIDLSRAQAARDRAQKRIAQAKNDHNQDDLRRAQVALRRAINRINVKTSH</sequence>
<comment type="function">
    <text evidence="1">Produces ATP from ADP in the presence of a proton gradient across the membrane.</text>
</comment>
<comment type="subunit">
    <text evidence="1">F-type ATPases have 2 components, CF(1) - the catalytic core - and CF(0) - the membrane proton channel. CF(1) has five subunits: alpha(3), beta(3), gamma(1), delta(1), epsilon(1). CF(0) has three main subunits: a, b and c.</text>
</comment>
<comment type="subcellular location">
    <subcellularLocation>
        <location evidence="1">Cell membrane</location>
        <topology evidence="1">Peripheral membrane protein</topology>
    </subcellularLocation>
</comment>
<comment type="similarity">
    <text evidence="1">Belongs to the ATPase epsilon chain family.</text>
</comment>
<name>ATPE_LACCB</name>
<reference key="1">
    <citation type="submission" date="2008-06" db="EMBL/GenBank/DDBJ databases">
        <title>Lactobacillus casei BL23 complete genome sequence.</title>
        <authorList>
            <person name="Maze A."/>
            <person name="Boel G."/>
            <person name="Bourand A."/>
            <person name="Loux V."/>
            <person name="Gibrat J.F."/>
            <person name="Zuniga M."/>
            <person name="Hartke A."/>
            <person name="Deutscher J."/>
        </authorList>
    </citation>
    <scope>NUCLEOTIDE SEQUENCE [LARGE SCALE GENOMIC DNA]</scope>
    <source>
        <strain>BL23</strain>
    </source>
</reference>
<dbReference type="EMBL" id="FM177140">
    <property type="protein sequence ID" value="CAQ66470.1"/>
    <property type="molecule type" value="Genomic_DNA"/>
</dbReference>
<dbReference type="SMR" id="B3WDL9"/>
<dbReference type="KEGG" id="lcb:LCABL_13890"/>
<dbReference type="HOGENOM" id="CLU_084338_1_0_9"/>
<dbReference type="GO" id="GO:0005886">
    <property type="term" value="C:plasma membrane"/>
    <property type="evidence" value="ECO:0007669"/>
    <property type="project" value="UniProtKB-SubCell"/>
</dbReference>
<dbReference type="GO" id="GO:0045259">
    <property type="term" value="C:proton-transporting ATP synthase complex"/>
    <property type="evidence" value="ECO:0007669"/>
    <property type="project" value="UniProtKB-KW"/>
</dbReference>
<dbReference type="GO" id="GO:0005524">
    <property type="term" value="F:ATP binding"/>
    <property type="evidence" value="ECO:0007669"/>
    <property type="project" value="UniProtKB-UniRule"/>
</dbReference>
<dbReference type="GO" id="GO:0046933">
    <property type="term" value="F:proton-transporting ATP synthase activity, rotational mechanism"/>
    <property type="evidence" value="ECO:0007669"/>
    <property type="project" value="UniProtKB-UniRule"/>
</dbReference>
<dbReference type="CDD" id="cd12152">
    <property type="entry name" value="F1-ATPase_delta"/>
    <property type="match status" value="1"/>
</dbReference>
<dbReference type="Gene3D" id="1.20.5.440">
    <property type="entry name" value="ATP synthase delta/epsilon subunit, C-terminal domain"/>
    <property type="match status" value="1"/>
</dbReference>
<dbReference type="Gene3D" id="2.60.15.10">
    <property type="entry name" value="F0F1 ATP synthase delta/epsilon subunit, N-terminal"/>
    <property type="match status" value="1"/>
</dbReference>
<dbReference type="HAMAP" id="MF_00530">
    <property type="entry name" value="ATP_synth_epsil_bac"/>
    <property type="match status" value="1"/>
</dbReference>
<dbReference type="InterPro" id="IPR036794">
    <property type="entry name" value="ATP_F1_dsu/esu_C_sf"/>
</dbReference>
<dbReference type="InterPro" id="IPR001469">
    <property type="entry name" value="ATP_synth_F1_dsu/esu"/>
</dbReference>
<dbReference type="InterPro" id="IPR020546">
    <property type="entry name" value="ATP_synth_F1_dsu/esu_N"/>
</dbReference>
<dbReference type="InterPro" id="IPR020547">
    <property type="entry name" value="ATP_synth_F1_esu_C"/>
</dbReference>
<dbReference type="InterPro" id="IPR036771">
    <property type="entry name" value="ATPsynth_dsu/esu_N"/>
</dbReference>
<dbReference type="NCBIfam" id="TIGR01216">
    <property type="entry name" value="ATP_synt_epsi"/>
    <property type="match status" value="1"/>
</dbReference>
<dbReference type="NCBIfam" id="NF001846">
    <property type="entry name" value="PRK00571.1-3"/>
    <property type="match status" value="1"/>
</dbReference>
<dbReference type="PANTHER" id="PTHR13822">
    <property type="entry name" value="ATP SYNTHASE DELTA/EPSILON CHAIN"/>
    <property type="match status" value="1"/>
</dbReference>
<dbReference type="PANTHER" id="PTHR13822:SF10">
    <property type="entry name" value="ATP SYNTHASE EPSILON CHAIN, CHLOROPLASTIC"/>
    <property type="match status" value="1"/>
</dbReference>
<dbReference type="Pfam" id="PF00401">
    <property type="entry name" value="ATP-synt_DE"/>
    <property type="match status" value="1"/>
</dbReference>
<dbReference type="Pfam" id="PF02823">
    <property type="entry name" value="ATP-synt_DE_N"/>
    <property type="match status" value="1"/>
</dbReference>
<dbReference type="SUPFAM" id="SSF46604">
    <property type="entry name" value="Epsilon subunit of F1F0-ATP synthase C-terminal domain"/>
    <property type="match status" value="1"/>
</dbReference>
<dbReference type="SUPFAM" id="SSF51344">
    <property type="entry name" value="Epsilon subunit of F1F0-ATP synthase N-terminal domain"/>
    <property type="match status" value="1"/>
</dbReference>
<organism>
    <name type="scientific">Lacticaseibacillus casei (strain BL23)</name>
    <name type="common">Lactobacillus casei</name>
    <dbReference type="NCBI Taxonomy" id="543734"/>
    <lineage>
        <taxon>Bacteria</taxon>
        <taxon>Bacillati</taxon>
        <taxon>Bacillota</taxon>
        <taxon>Bacilli</taxon>
        <taxon>Lactobacillales</taxon>
        <taxon>Lactobacillaceae</taxon>
        <taxon>Lacticaseibacillus</taxon>
    </lineage>
</organism>
<protein>
    <recommendedName>
        <fullName evidence="1">ATP synthase epsilon chain</fullName>
    </recommendedName>
    <alternativeName>
        <fullName evidence="1">ATP synthase F1 sector epsilon subunit</fullName>
    </alternativeName>
    <alternativeName>
        <fullName evidence="1">F-ATPase epsilon subunit</fullName>
    </alternativeName>
</protein>
<feature type="chain" id="PRO_1000127868" description="ATP synthase epsilon chain">
    <location>
        <begin position="1"/>
        <end position="143"/>
    </location>
</feature>
<keyword id="KW-0066">ATP synthesis</keyword>
<keyword id="KW-1003">Cell membrane</keyword>
<keyword id="KW-0139">CF(1)</keyword>
<keyword id="KW-0375">Hydrogen ion transport</keyword>
<keyword id="KW-0406">Ion transport</keyword>
<keyword id="KW-0472">Membrane</keyword>
<keyword id="KW-0813">Transport</keyword>
<gene>
    <name evidence="1" type="primary">atpC</name>
    <name type="ordered locus">LCABL_13890</name>
</gene>
<accession>B3WDL9</accession>
<evidence type="ECO:0000255" key="1">
    <source>
        <dbReference type="HAMAP-Rule" id="MF_00530"/>
    </source>
</evidence>